<reference key="1">
    <citation type="journal article" date="2003" name="Proc. Natl. Acad. Sci. U.S.A.">
        <title>The genome sequence of Blochmannia floridanus: comparative analysis of reduced genomes.</title>
        <authorList>
            <person name="Gil R."/>
            <person name="Silva F.J."/>
            <person name="Zientz E."/>
            <person name="Delmotte F."/>
            <person name="Gonzalez-Candelas F."/>
            <person name="Latorre A."/>
            <person name="Rausell C."/>
            <person name="Kamerbeek J."/>
            <person name="Gadau J."/>
            <person name="Hoelldobler B."/>
            <person name="van Ham R.C.H.J."/>
            <person name="Gross R."/>
            <person name="Moya A."/>
        </authorList>
    </citation>
    <scope>NUCLEOTIDE SEQUENCE [LARGE SCALE GENOMIC DNA]</scope>
</reference>
<accession>P59838</accession>
<dbReference type="EC" id="5.4.99.23" evidence="2"/>
<dbReference type="EMBL" id="BX248583">
    <property type="protein sequence ID" value="CAD83700.1"/>
    <property type="molecule type" value="Genomic_DNA"/>
</dbReference>
<dbReference type="SMR" id="P59838"/>
<dbReference type="STRING" id="203907.Bfl181"/>
<dbReference type="KEGG" id="bfl:Bfl181"/>
<dbReference type="eggNOG" id="COG0564">
    <property type="taxonomic scope" value="Bacteria"/>
</dbReference>
<dbReference type="HOGENOM" id="CLU_016902_4_4_6"/>
<dbReference type="OrthoDB" id="9807829at2"/>
<dbReference type="Proteomes" id="UP000002192">
    <property type="component" value="Chromosome"/>
</dbReference>
<dbReference type="GO" id="GO:0005737">
    <property type="term" value="C:cytoplasm"/>
    <property type="evidence" value="ECO:0007669"/>
    <property type="project" value="UniProtKB-SubCell"/>
</dbReference>
<dbReference type="GO" id="GO:0160140">
    <property type="term" value="F:23S rRNA pseudouridine(1911/1915/1917) synthase activity"/>
    <property type="evidence" value="ECO:0007669"/>
    <property type="project" value="UniProtKB-EC"/>
</dbReference>
<dbReference type="GO" id="GO:0003723">
    <property type="term" value="F:RNA binding"/>
    <property type="evidence" value="ECO:0007669"/>
    <property type="project" value="UniProtKB-KW"/>
</dbReference>
<dbReference type="GO" id="GO:0000455">
    <property type="term" value="P:enzyme-directed rRNA pseudouridine synthesis"/>
    <property type="evidence" value="ECO:0007669"/>
    <property type="project" value="UniProtKB-ARBA"/>
</dbReference>
<dbReference type="CDD" id="cd02869">
    <property type="entry name" value="PseudoU_synth_RluA_like"/>
    <property type="match status" value="1"/>
</dbReference>
<dbReference type="CDD" id="cd00165">
    <property type="entry name" value="S4"/>
    <property type="match status" value="1"/>
</dbReference>
<dbReference type="Gene3D" id="3.30.2350.10">
    <property type="entry name" value="Pseudouridine synthase"/>
    <property type="match status" value="1"/>
</dbReference>
<dbReference type="Gene3D" id="3.10.290.10">
    <property type="entry name" value="RNA-binding S4 domain"/>
    <property type="match status" value="1"/>
</dbReference>
<dbReference type="InterPro" id="IPR020103">
    <property type="entry name" value="PsdUridine_synth_cat_dom_sf"/>
</dbReference>
<dbReference type="InterPro" id="IPR006224">
    <property type="entry name" value="PsdUridine_synth_RluA-like_CS"/>
</dbReference>
<dbReference type="InterPro" id="IPR006225">
    <property type="entry name" value="PsdUridine_synth_RluC/D"/>
</dbReference>
<dbReference type="InterPro" id="IPR006145">
    <property type="entry name" value="PsdUridine_synth_RsuA/RluA"/>
</dbReference>
<dbReference type="InterPro" id="IPR050188">
    <property type="entry name" value="RluA_PseudoU_synthase"/>
</dbReference>
<dbReference type="InterPro" id="IPR002942">
    <property type="entry name" value="S4_RNA-bd"/>
</dbReference>
<dbReference type="InterPro" id="IPR036986">
    <property type="entry name" value="S4_RNA-bd_sf"/>
</dbReference>
<dbReference type="NCBIfam" id="NF008385">
    <property type="entry name" value="PRK11180.1"/>
    <property type="match status" value="1"/>
</dbReference>
<dbReference type="NCBIfam" id="TIGR00005">
    <property type="entry name" value="rluA_subfam"/>
    <property type="match status" value="1"/>
</dbReference>
<dbReference type="PANTHER" id="PTHR21600">
    <property type="entry name" value="MITOCHONDRIAL RNA PSEUDOURIDINE SYNTHASE"/>
    <property type="match status" value="1"/>
</dbReference>
<dbReference type="PANTHER" id="PTHR21600:SF44">
    <property type="entry name" value="RIBOSOMAL LARGE SUBUNIT PSEUDOURIDINE SYNTHASE D"/>
    <property type="match status" value="1"/>
</dbReference>
<dbReference type="Pfam" id="PF00849">
    <property type="entry name" value="PseudoU_synth_2"/>
    <property type="match status" value="1"/>
</dbReference>
<dbReference type="Pfam" id="PF01479">
    <property type="entry name" value="S4"/>
    <property type="match status" value="1"/>
</dbReference>
<dbReference type="SMART" id="SM00363">
    <property type="entry name" value="S4"/>
    <property type="match status" value="1"/>
</dbReference>
<dbReference type="SUPFAM" id="SSF55174">
    <property type="entry name" value="Alpha-L RNA-binding motif"/>
    <property type="match status" value="1"/>
</dbReference>
<dbReference type="SUPFAM" id="SSF55120">
    <property type="entry name" value="Pseudouridine synthase"/>
    <property type="match status" value="1"/>
</dbReference>
<dbReference type="PROSITE" id="PS01129">
    <property type="entry name" value="PSI_RLU"/>
    <property type="match status" value="1"/>
</dbReference>
<dbReference type="PROSITE" id="PS50889">
    <property type="entry name" value="S4"/>
    <property type="match status" value="1"/>
</dbReference>
<gene>
    <name type="primary">rluD</name>
    <name type="ordered locus">Bfl181</name>
</gene>
<protein>
    <recommendedName>
        <fullName evidence="2">Ribosomal large subunit pseudouridine synthase D</fullName>
        <ecNumber evidence="2">5.4.99.23</ecNumber>
    </recommendedName>
    <alternativeName>
        <fullName>23S rRNA pseudouridine(1911/1915/1917) synthase</fullName>
    </alternativeName>
    <alternativeName>
        <fullName>rRNA pseudouridylate synthase D</fullName>
    </alternativeName>
    <alternativeName>
        <fullName>rRNA-uridine isomerase D</fullName>
    </alternativeName>
</protein>
<feature type="chain" id="PRO_0000162687" description="Ribosomal large subunit pseudouridine synthase D">
    <location>
        <begin position="1"/>
        <end position="321"/>
    </location>
</feature>
<feature type="domain" description="S4 RNA-binding" evidence="3">
    <location>
        <begin position="16"/>
        <end position="93"/>
    </location>
</feature>
<feature type="active site" evidence="1">
    <location>
        <position position="142"/>
    </location>
</feature>
<proteinExistence type="inferred from homology"/>
<keyword id="KW-0963">Cytoplasm</keyword>
<keyword id="KW-0413">Isomerase</keyword>
<keyword id="KW-1185">Reference proteome</keyword>
<keyword id="KW-0694">RNA-binding</keyword>
<keyword id="KW-0698">rRNA processing</keyword>
<evidence type="ECO:0000250" key="1"/>
<evidence type="ECO:0000250" key="2">
    <source>
        <dbReference type="UniProtKB" id="P33643"/>
    </source>
</evidence>
<evidence type="ECO:0000255" key="3">
    <source>
        <dbReference type="PROSITE-ProRule" id="PRU00182"/>
    </source>
</evidence>
<evidence type="ECO:0000305" key="4"/>
<name>RLUD_BLOFL</name>
<organism>
    <name type="scientific">Blochmanniella floridana</name>
    <dbReference type="NCBI Taxonomy" id="203907"/>
    <lineage>
        <taxon>Bacteria</taxon>
        <taxon>Pseudomonadati</taxon>
        <taxon>Pseudomonadota</taxon>
        <taxon>Gammaproteobacteria</taxon>
        <taxon>Enterobacterales</taxon>
        <taxon>Enterobacteriaceae</taxon>
        <taxon>ant endosymbionts</taxon>
        <taxon>Candidatus Blochmanniella</taxon>
    </lineage>
</organism>
<comment type="function">
    <text evidence="2">Responsible for synthesis of pseudouridine from uracil at positions 1911, 1915 and 1917 in 23S ribosomal RNA.</text>
</comment>
<comment type="catalytic activity">
    <reaction evidence="2">
        <text>uridine(1911/1915/1917) in 23S rRNA = pseudouridine(1911/1915/1917) in 23S rRNA</text>
        <dbReference type="Rhea" id="RHEA:42524"/>
        <dbReference type="Rhea" id="RHEA-COMP:10097"/>
        <dbReference type="Rhea" id="RHEA-COMP:10098"/>
        <dbReference type="ChEBI" id="CHEBI:65314"/>
        <dbReference type="ChEBI" id="CHEBI:65315"/>
        <dbReference type="EC" id="5.4.99.23"/>
    </reaction>
</comment>
<comment type="subcellular location">
    <subcellularLocation>
        <location evidence="2">Cytoplasm</location>
    </subcellularLocation>
    <text evidence="2">Associates with late stage pre-50S ribosomal subunits.</text>
</comment>
<comment type="similarity">
    <text evidence="4">Belongs to the pseudouridine synthase RluA family.</text>
</comment>
<sequence length="321" mass="37066">MVIIKPMIVQVHQSGYRLDYILSKLLPQYSRSQIKHWILNKKVVVNNQVSTLPRKKVVYGELIEIKYINNNDICKSEDIVPQNIPLNIIYEDNDILVINKASNMVVHPGIGHYQGTVLNALLYRYPSILKISKQAGIVQRLDKDTTGLMIIAKTVSAYDNLLRSFKLRKVVKEYDAIVYGKFTSNAGVVNQPMRRHFAKRTFMSVHYTGKSAVTYYSVVEEFKAHSRVRINLKTGRTHQIRVHMAYINHPLVGDQKYKGNFSVFDIKKMSDELNNYLLDFNRQALHACTLQLLHPITQVQMKWNAPLPQDILQLIAILKKY</sequence>